<sequence>MAQANFGVVGMAVMGKNLALNVESRGYTVAIYNRTTSKTEEVYKEHQDKNLVLTKTLEEFVGSLEKPRRIMLMVQAGAATDATIKSLLPLLDKGDILIDGGNTHFPDTMRRNAELADSGINFIGTGVSGGEKGALLGPSMMPGGQKEAYDLVAPIFEQIAAKAPQDGKPCVAYMGANGAGHYVKMVHNGIEYGDMQLIAESYDLLKRVLGLSNAEIQAIFEEWNEGELDSYLIEITKEVLKRKDDEGEGYIVDKILDKAGNKGTGKWTSESALDLGVPLPLITESVFARYISTYKDERVKASKVLSGPAVNFSGDKKEVIEKIRKALYFSKIMSYAQGFAQLRKASEEFDWDLPYGTIAQIWRAGCIIRAEFLQNITDAFDKDSELENLLLDDYFVDITKRYQEAVRDVVSLAVQAGIPIPTFTSAISYYDSYRSENLPANLIQAQRDYFGAHTYERTDKAGIFHYDWYTED</sequence>
<protein>
    <recommendedName>
        <fullName>6-phosphogluconate dehydrogenase, decarboxylating</fullName>
        <ecNumber>1.1.1.44</ecNumber>
    </recommendedName>
</protein>
<comment type="function">
    <text evidence="1">Catalyzes the oxidative decarboxylation of 6-phosphogluconate to ribulose 5-phosphate and CO(2), with concomitant reduction of NADP to NADPH.</text>
</comment>
<comment type="catalytic activity">
    <reaction>
        <text>6-phospho-D-gluconate + NADP(+) = D-ribulose 5-phosphate + CO2 + NADPH</text>
        <dbReference type="Rhea" id="RHEA:10116"/>
        <dbReference type="ChEBI" id="CHEBI:16526"/>
        <dbReference type="ChEBI" id="CHEBI:57783"/>
        <dbReference type="ChEBI" id="CHEBI:58121"/>
        <dbReference type="ChEBI" id="CHEBI:58349"/>
        <dbReference type="ChEBI" id="CHEBI:58759"/>
        <dbReference type="EC" id="1.1.1.44"/>
    </reaction>
</comment>
<comment type="pathway">
    <text>Carbohydrate degradation; pentose phosphate pathway; D-ribulose 5-phosphate from D-glucose 6-phosphate (oxidative stage): step 3/3.</text>
</comment>
<comment type="subunit">
    <text evidence="1">Homodimer.</text>
</comment>
<comment type="similarity">
    <text evidence="2">Belongs to the 6-phosphogluconate dehydrogenase family.</text>
</comment>
<proteinExistence type="inferred from homology"/>
<evidence type="ECO:0000250" key="1"/>
<evidence type="ECO:0000305" key="2"/>
<accession>Q9CHU6</accession>
<keyword id="KW-0311">Gluconate utilization</keyword>
<keyword id="KW-0521">NADP</keyword>
<keyword id="KW-0560">Oxidoreductase</keyword>
<keyword id="KW-0570">Pentose shunt</keyword>
<keyword id="KW-1185">Reference proteome</keyword>
<feature type="chain" id="PRO_0000090045" description="6-phosphogluconate dehydrogenase, decarboxylating">
    <location>
        <begin position="1"/>
        <end position="472"/>
    </location>
</feature>
<feature type="active site" description="Proton acceptor" evidence="1">
    <location>
        <position position="184"/>
    </location>
</feature>
<feature type="active site" description="Proton donor" evidence="1">
    <location>
        <position position="191"/>
    </location>
</feature>
<feature type="binding site" evidence="1">
    <location>
        <begin position="10"/>
        <end position="15"/>
    </location>
    <ligand>
        <name>NADP(+)</name>
        <dbReference type="ChEBI" id="CHEBI:58349"/>
    </ligand>
</feature>
<feature type="binding site" evidence="1">
    <location>
        <begin position="33"/>
        <end position="35"/>
    </location>
    <ligand>
        <name>NADP(+)</name>
        <dbReference type="ChEBI" id="CHEBI:58349"/>
    </ligand>
</feature>
<feature type="binding site" evidence="1">
    <location>
        <begin position="74"/>
        <end position="76"/>
    </location>
    <ligand>
        <name>NADP(+)</name>
        <dbReference type="ChEBI" id="CHEBI:58349"/>
    </ligand>
</feature>
<feature type="binding site" evidence="1">
    <location>
        <position position="102"/>
    </location>
    <ligand>
        <name>NADP(+)</name>
        <dbReference type="ChEBI" id="CHEBI:58349"/>
    </ligand>
</feature>
<feature type="binding site" description="in other chain" evidence="1">
    <location>
        <position position="102"/>
    </location>
    <ligand>
        <name>substrate</name>
        <note>ligand shared between dimeric partners</note>
    </ligand>
</feature>
<feature type="binding site" description="in other chain" evidence="1">
    <location>
        <begin position="128"/>
        <end position="130"/>
    </location>
    <ligand>
        <name>substrate</name>
        <note>ligand shared between dimeric partners</note>
    </ligand>
</feature>
<feature type="binding site" description="in other chain" evidence="1">
    <location>
        <begin position="187"/>
        <end position="188"/>
    </location>
    <ligand>
        <name>substrate</name>
        <note>ligand shared between dimeric partners</note>
    </ligand>
</feature>
<feature type="binding site" description="in other chain" evidence="1">
    <location>
        <position position="192"/>
    </location>
    <ligand>
        <name>substrate</name>
        <note>ligand shared between dimeric partners</note>
    </ligand>
</feature>
<feature type="binding site" description="in other chain" evidence="1">
    <location>
        <position position="262"/>
    </location>
    <ligand>
        <name>substrate</name>
        <note>ligand shared between dimeric partners</note>
    </ligand>
</feature>
<feature type="binding site" description="in other chain" evidence="1">
    <location>
        <position position="289"/>
    </location>
    <ligand>
        <name>substrate</name>
        <note>ligand shared between dimeric partners</note>
    </ligand>
</feature>
<feature type="binding site" evidence="1">
    <location>
        <position position="447"/>
    </location>
    <ligand>
        <name>substrate</name>
        <note>ligand shared between dimeric partners</note>
    </ligand>
</feature>
<feature type="binding site" evidence="1">
    <location>
        <position position="453"/>
    </location>
    <ligand>
        <name>substrate</name>
        <note>ligand shared between dimeric partners</note>
    </ligand>
</feature>
<reference key="1">
    <citation type="journal article" date="2001" name="Genome Res.">
        <title>The complete genome sequence of the lactic acid bacterium Lactococcus lactis ssp. lactis IL1403.</title>
        <authorList>
            <person name="Bolotin A."/>
            <person name="Wincker P."/>
            <person name="Mauger S."/>
            <person name="Jaillon O."/>
            <person name="Malarme K."/>
            <person name="Weissenbach J."/>
            <person name="Ehrlich S.D."/>
            <person name="Sorokin A."/>
        </authorList>
    </citation>
    <scope>NUCLEOTIDE SEQUENCE [LARGE SCALE GENOMIC DNA]</scope>
    <source>
        <strain>IL1403</strain>
    </source>
</reference>
<dbReference type="EC" id="1.1.1.44"/>
<dbReference type="EMBL" id="AE005176">
    <property type="protein sequence ID" value="AAK04720.1"/>
    <property type="molecule type" value="Genomic_DNA"/>
</dbReference>
<dbReference type="PIR" id="F86702">
    <property type="entry name" value="F86702"/>
</dbReference>
<dbReference type="RefSeq" id="NP_266778.1">
    <property type="nucleotide sequence ID" value="NC_002662.1"/>
</dbReference>
<dbReference type="SMR" id="Q9CHU6"/>
<dbReference type="PaxDb" id="272623-L0046"/>
<dbReference type="EnsemblBacteria" id="AAK04720">
    <property type="protein sequence ID" value="AAK04720"/>
    <property type="gene ID" value="L0046"/>
</dbReference>
<dbReference type="KEGG" id="lla:L0046"/>
<dbReference type="PATRIC" id="fig|272623.7.peg.664"/>
<dbReference type="eggNOG" id="COG0362">
    <property type="taxonomic scope" value="Bacteria"/>
</dbReference>
<dbReference type="HOGENOM" id="CLU_024540_4_2_9"/>
<dbReference type="OrthoDB" id="9804542at2"/>
<dbReference type="UniPathway" id="UPA00115">
    <property type="reaction ID" value="UER00410"/>
</dbReference>
<dbReference type="Proteomes" id="UP000002196">
    <property type="component" value="Chromosome"/>
</dbReference>
<dbReference type="GO" id="GO:0050661">
    <property type="term" value="F:NADP binding"/>
    <property type="evidence" value="ECO:0007669"/>
    <property type="project" value="InterPro"/>
</dbReference>
<dbReference type="GO" id="GO:0004616">
    <property type="term" value="F:phosphogluconate dehydrogenase (decarboxylating) activity"/>
    <property type="evidence" value="ECO:0007669"/>
    <property type="project" value="UniProtKB-EC"/>
</dbReference>
<dbReference type="GO" id="GO:0019521">
    <property type="term" value="P:D-gluconate metabolic process"/>
    <property type="evidence" value="ECO:0007669"/>
    <property type="project" value="UniProtKB-KW"/>
</dbReference>
<dbReference type="GO" id="GO:0016054">
    <property type="term" value="P:organic acid catabolic process"/>
    <property type="evidence" value="ECO:0007669"/>
    <property type="project" value="UniProtKB-ARBA"/>
</dbReference>
<dbReference type="GO" id="GO:0006098">
    <property type="term" value="P:pentose-phosphate shunt"/>
    <property type="evidence" value="ECO:0007669"/>
    <property type="project" value="UniProtKB-UniPathway"/>
</dbReference>
<dbReference type="FunFam" id="1.10.1040.10:FF:000002">
    <property type="entry name" value="6-phosphogluconate dehydrogenase, decarboxylating"/>
    <property type="match status" value="1"/>
</dbReference>
<dbReference type="FunFam" id="1.20.5.320:FF:000001">
    <property type="entry name" value="6-phosphogluconate dehydrogenase, decarboxylating"/>
    <property type="match status" value="1"/>
</dbReference>
<dbReference type="FunFam" id="3.40.50.720:FF:000007">
    <property type="entry name" value="6-phosphogluconate dehydrogenase, decarboxylating"/>
    <property type="match status" value="1"/>
</dbReference>
<dbReference type="Gene3D" id="1.20.5.320">
    <property type="entry name" value="6-Phosphogluconate Dehydrogenase, domain 3"/>
    <property type="match status" value="1"/>
</dbReference>
<dbReference type="Gene3D" id="1.10.1040.10">
    <property type="entry name" value="N-(1-d-carboxylethyl)-l-norvaline Dehydrogenase, domain 2"/>
    <property type="match status" value="1"/>
</dbReference>
<dbReference type="Gene3D" id="3.40.50.720">
    <property type="entry name" value="NAD(P)-binding Rossmann-like Domain"/>
    <property type="match status" value="1"/>
</dbReference>
<dbReference type="InterPro" id="IPR008927">
    <property type="entry name" value="6-PGluconate_DH-like_C_sf"/>
</dbReference>
<dbReference type="InterPro" id="IPR013328">
    <property type="entry name" value="6PGD_dom2"/>
</dbReference>
<dbReference type="InterPro" id="IPR006114">
    <property type="entry name" value="6PGDH_C"/>
</dbReference>
<dbReference type="InterPro" id="IPR006113">
    <property type="entry name" value="6PGDH_Gnd/GntZ"/>
</dbReference>
<dbReference type="InterPro" id="IPR006115">
    <property type="entry name" value="6PGDH_NADP-bd"/>
</dbReference>
<dbReference type="InterPro" id="IPR006184">
    <property type="entry name" value="6PGdom_BS"/>
</dbReference>
<dbReference type="InterPro" id="IPR036291">
    <property type="entry name" value="NAD(P)-bd_dom_sf"/>
</dbReference>
<dbReference type="InterPro" id="IPR006183">
    <property type="entry name" value="Pgluconate_DH"/>
</dbReference>
<dbReference type="NCBIfam" id="TIGR00873">
    <property type="entry name" value="gnd"/>
    <property type="match status" value="1"/>
</dbReference>
<dbReference type="NCBIfam" id="NF006765">
    <property type="entry name" value="PRK09287.1"/>
    <property type="match status" value="1"/>
</dbReference>
<dbReference type="PANTHER" id="PTHR11811">
    <property type="entry name" value="6-PHOSPHOGLUCONATE DEHYDROGENASE"/>
    <property type="match status" value="1"/>
</dbReference>
<dbReference type="Pfam" id="PF00393">
    <property type="entry name" value="6PGD"/>
    <property type="match status" value="1"/>
</dbReference>
<dbReference type="Pfam" id="PF03446">
    <property type="entry name" value="NAD_binding_2"/>
    <property type="match status" value="1"/>
</dbReference>
<dbReference type="PIRSF" id="PIRSF000109">
    <property type="entry name" value="6PGD"/>
    <property type="match status" value="1"/>
</dbReference>
<dbReference type="PRINTS" id="PR00076">
    <property type="entry name" value="6PGDHDRGNASE"/>
</dbReference>
<dbReference type="SMART" id="SM01350">
    <property type="entry name" value="6PGD"/>
    <property type="match status" value="1"/>
</dbReference>
<dbReference type="SUPFAM" id="SSF48179">
    <property type="entry name" value="6-phosphogluconate dehydrogenase C-terminal domain-like"/>
    <property type="match status" value="1"/>
</dbReference>
<dbReference type="SUPFAM" id="SSF51735">
    <property type="entry name" value="NAD(P)-binding Rossmann-fold domains"/>
    <property type="match status" value="1"/>
</dbReference>
<dbReference type="PROSITE" id="PS00461">
    <property type="entry name" value="6PGD"/>
    <property type="match status" value="1"/>
</dbReference>
<organism>
    <name type="scientific">Lactococcus lactis subsp. lactis (strain IL1403)</name>
    <name type="common">Streptococcus lactis</name>
    <dbReference type="NCBI Taxonomy" id="272623"/>
    <lineage>
        <taxon>Bacteria</taxon>
        <taxon>Bacillati</taxon>
        <taxon>Bacillota</taxon>
        <taxon>Bacilli</taxon>
        <taxon>Lactobacillales</taxon>
        <taxon>Streptococcaceae</taxon>
        <taxon>Lactococcus</taxon>
    </lineage>
</organism>
<name>6PGD_LACLA</name>
<gene>
    <name type="primary">gnd</name>
    <name type="ordered locus">LL0622</name>
    <name type="ORF">L0046</name>
</gene>